<accession>P0DOO3</accession>
<accession>P33798</accession>
<accession>Q90028</accession>
<reference key="1">
    <citation type="journal article" date="1991" name="Dokl. Akad. Nauk SSSR">
        <title>Creation of a clone library of fragments from the natural variola virus and study of the structural and functional organization of viral genes from a circle of hosts.</title>
        <authorList>
            <person name="Shchelkunov S.N."/>
            <person name="Marennikova S.S."/>
            <person name="Totmenin A.V."/>
            <person name="Blinov V.M."/>
            <person name="Chizhikov V.E."/>
            <person name="Gutorov V.V."/>
            <person name="Safronov P.F."/>
            <person name="Pozdnyakov S.G."/>
            <person name="Shelukhina E.M."/>
            <person name="Gashnikov P.V."/>
            <person name="Anjaparidze O.G."/>
            <person name="Sandakhchiev L.S."/>
        </authorList>
    </citation>
    <scope>NUCLEOTIDE SEQUENCE [GENOMIC DNA]</scope>
</reference>
<reference key="2">
    <citation type="journal article" date="1993" name="FEBS Lett.">
        <title>Genes of variola and vaccinia viruses necessary to overcome the host protective mechanisms.</title>
        <authorList>
            <person name="Shchelkunov S.N."/>
            <person name="Blinov V.M."/>
            <person name="Sandakhchiev L.S."/>
        </authorList>
    </citation>
    <scope>NUCLEOTIDE SEQUENCE [LARGE SCALE GENOMIC DNA]</scope>
</reference>
<comment type="function">
    <text evidence="1">DNA ligase that seals nicks in double-stranded DNA during DNA replication, DNA recombination and DNA repair. Recruits cellular topoisomerase II to sites of viral replication and assembly.</text>
</comment>
<comment type="catalytic activity">
    <reaction evidence="3">
        <text>ATP + (deoxyribonucleotide)n-3'-hydroxyl + 5'-phospho-(deoxyribonucleotide)m = (deoxyribonucleotide)n+m + AMP + diphosphate.</text>
        <dbReference type="EC" id="6.5.1.1"/>
    </reaction>
</comment>
<comment type="cofactor">
    <cofactor evidence="2">
        <name>Mg(2+)</name>
        <dbReference type="ChEBI" id="CHEBI:18420"/>
    </cofactor>
</comment>
<comment type="subunit">
    <text evidence="1">Interacts with host TOP2A and TOP2B.</text>
</comment>
<comment type="subcellular location">
    <subcellularLocation>
        <location evidence="1">Host cytoplasm</location>
    </subcellularLocation>
    <text evidence="1">Found in sites viral of replication and assembly.</text>
</comment>
<comment type="induction">
    <text>Expressed in the early phase of the viral replicative cycle.</text>
</comment>
<comment type="similarity">
    <text evidence="4">Belongs to the ATP-dependent DNA ligase family.</text>
</comment>
<keyword id="KW-0067">ATP-binding</keyword>
<keyword id="KW-0131">Cell cycle</keyword>
<keyword id="KW-0132">Cell division</keyword>
<keyword id="KW-0227">DNA damage</keyword>
<keyword id="KW-0233">DNA recombination</keyword>
<keyword id="KW-0234">DNA repair</keyword>
<keyword id="KW-0235">DNA replication</keyword>
<keyword id="KW-0244">Early protein</keyword>
<keyword id="KW-1035">Host cytoplasm</keyword>
<keyword id="KW-0436">Ligase</keyword>
<keyword id="KW-0460">Magnesium</keyword>
<keyword id="KW-0479">Metal-binding</keyword>
<keyword id="KW-0547">Nucleotide-binding</keyword>
<keyword id="KW-1185">Reference proteome</keyword>
<dbReference type="EC" id="6.5.1.1" evidence="3"/>
<dbReference type="EMBL" id="X69198">
    <property type="protein sequence ID" value="CAA49103.1"/>
    <property type="molecule type" value="Genomic_DNA"/>
</dbReference>
<dbReference type="EMBL" id="X67118">
    <property type="protein sequence ID" value="CAA47545.1"/>
    <property type="molecule type" value="Genomic_DNA"/>
</dbReference>
<dbReference type="PIR" id="C36854">
    <property type="entry name" value="JQ1857"/>
</dbReference>
<dbReference type="RefSeq" id="NP_042206.1">
    <property type="nucleotide sequence ID" value="NC_001611.1"/>
</dbReference>
<dbReference type="SMR" id="P0DOO3"/>
<dbReference type="GeneID" id="1486450"/>
<dbReference type="KEGG" id="vg:1486450"/>
<dbReference type="Proteomes" id="UP000002060">
    <property type="component" value="Segment"/>
</dbReference>
<dbReference type="GO" id="GO:0030430">
    <property type="term" value="C:host cell cytoplasm"/>
    <property type="evidence" value="ECO:0007669"/>
    <property type="project" value="UniProtKB-SubCell"/>
</dbReference>
<dbReference type="GO" id="GO:0005524">
    <property type="term" value="F:ATP binding"/>
    <property type="evidence" value="ECO:0007669"/>
    <property type="project" value="UniProtKB-KW"/>
</dbReference>
<dbReference type="GO" id="GO:0003677">
    <property type="term" value="F:DNA binding"/>
    <property type="evidence" value="ECO:0007669"/>
    <property type="project" value="InterPro"/>
</dbReference>
<dbReference type="GO" id="GO:0003910">
    <property type="term" value="F:DNA ligase (ATP) activity"/>
    <property type="evidence" value="ECO:0007669"/>
    <property type="project" value="UniProtKB-EC"/>
</dbReference>
<dbReference type="GO" id="GO:0046872">
    <property type="term" value="F:metal ion binding"/>
    <property type="evidence" value="ECO:0007669"/>
    <property type="project" value="UniProtKB-KW"/>
</dbReference>
<dbReference type="GO" id="GO:0051301">
    <property type="term" value="P:cell division"/>
    <property type="evidence" value="ECO:0007669"/>
    <property type="project" value="UniProtKB-KW"/>
</dbReference>
<dbReference type="GO" id="GO:0071897">
    <property type="term" value="P:DNA biosynthetic process"/>
    <property type="evidence" value="ECO:0007669"/>
    <property type="project" value="InterPro"/>
</dbReference>
<dbReference type="GO" id="GO:0006310">
    <property type="term" value="P:DNA recombination"/>
    <property type="evidence" value="ECO:0007669"/>
    <property type="project" value="UniProtKB-KW"/>
</dbReference>
<dbReference type="GO" id="GO:0006302">
    <property type="term" value="P:double-strand break repair"/>
    <property type="evidence" value="ECO:0007669"/>
    <property type="project" value="TreeGrafter"/>
</dbReference>
<dbReference type="GO" id="GO:0006273">
    <property type="term" value="P:lagging strand elongation"/>
    <property type="evidence" value="ECO:0007669"/>
    <property type="project" value="TreeGrafter"/>
</dbReference>
<dbReference type="CDD" id="cd07967">
    <property type="entry name" value="OBF_DNA_ligase_III"/>
    <property type="match status" value="1"/>
</dbReference>
<dbReference type="FunFam" id="2.40.50.140:FF:000085">
    <property type="entry name" value="DNA ligase"/>
    <property type="match status" value="1"/>
</dbReference>
<dbReference type="FunFam" id="3.30.470.30:FF:000003">
    <property type="entry name" value="DNA ligase"/>
    <property type="match status" value="1"/>
</dbReference>
<dbReference type="Gene3D" id="3.30.1490.70">
    <property type="match status" value="1"/>
</dbReference>
<dbReference type="Gene3D" id="1.10.3260.10">
    <property type="entry name" value="DNA ligase, ATP-dependent, N-terminal domain"/>
    <property type="match status" value="1"/>
</dbReference>
<dbReference type="Gene3D" id="3.30.470.30">
    <property type="entry name" value="DNA ligase/mRNA capping enzyme"/>
    <property type="match status" value="1"/>
</dbReference>
<dbReference type="Gene3D" id="2.40.50.140">
    <property type="entry name" value="Nucleic acid-binding proteins"/>
    <property type="match status" value="1"/>
</dbReference>
<dbReference type="InterPro" id="IPR050191">
    <property type="entry name" value="ATP-dep_DNA_ligase"/>
</dbReference>
<dbReference type="InterPro" id="IPR000977">
    <property type="entry name" value="DNA_ligase_ATP-dep"/>
</dbReference>
<dbReference type="InterPro" id="IPR012309">
    <property type="entry name" value="DNA_ligase_ATP-dep_C"/>
</dbReference>
<dbReference type="InterPro" id="IPR012310">
    <property type="entry name" value="DNA_ligase_ATP-dep_cent"/>
</dbReference>
<dbReference type="InterPro" id="IPR016059">
    <property type="entry name" value="DNA_ligase_ATP-dep_CS"/>
</dbReference>
<dbReference type="InterPro" id="IPR012308">
    <property type="entry name" value="DNA_ligase_ATP-dep_N"/>
</dbReference>
<dbReference type="InterPro" id="IPR036599">
    <property type="entry name" value="DNA_ligase_N_sf"/>
</dbReference>
<dbReference type="InterPro" id="IPR012340">
    <property type="entry name" value="NA-bd_OB-fold"/>
</dbReference>
<dbReference type="NCBIfam" id="TIGR00574">
    <property type="entry name" value="dnl1"/>
    <property type="match status" value="1"/>
</dbReference>
<dbReference type="PANTHER" id="PTHR45674">
    <property type="entry name" value="DNA LIGASE 1/3 FAMILY MEMBER"/>
    <property type="match status" value="1"/>
</dbReference>
<dbReference type="PANTHER" id="PTHR45674:SF9">
    <property type="entry name" value="DNA LIGASE 3"/>
    <property type="match status" value="1"/>
</dbReference>
<dbReference type="Pfam" id="PF04679">
    <property type="entry name" value="DNA_ligase_A_C"/>
    <property type="match status" value="1"/>
</dbReference>
<dbReference type="Pfam" id="PF01068">
    <property type="entry name" value="DNA_ligase_A_M"/>
    <property type="match status" value="1"/>
</dbReference>
<dbReference type="Pfam" id="PF04675">
    <property type="entry name" value="DNA_ligase_A_N"/>
    <property type="match status" value="1"/>
</dbReference>
<dbReference type="SUPFAM" id="SSF117018">
    <property type="entry name" value="ATP-dependent DNA ligase DNA-binding domain"/>
    <property type="match status" value="1"/>
</dbReference>
<dbReference type="SUPFAM" id="SSF56091">
    <property type="entry name" value="DNA ligase/mRNA capping enzyme, catalytic domain"/>
    <property type="match status" value="1"/>
</dbReference>
<dbReference type="SUPFAM" id="SSF50249">
    <property type="entry name" value="Nucleic acid-binding proteins"/>
    <property type="match status" value="1"/>
</dbReference>
<dbReference type="PROSITE" id="PS00697">
    <property type="entry name" value="DNA_LIGASE_A1"/>
    <property type="match status" value="1"/>
</dbReference>
<dbReference type="PROSITE" id="PS00333">
    <property type="entry name" value="DNA_LIGASE_A2"/>
    <property type="match status" value="1"/>
</dbReference>
<dbReference type="PROSITE" id="PS50160">
    <property type="entry name" value="DNA_LIGASE_A3"/>
    <property type="match status" value="1"/>
</dbReference>
<feature type="chain" id="PRO_0000059590" description="DNA ligase">
    <location>
        <begin position="1"/>
        <end position="552"/>
    </location>
</feature>
<feature type="active site" description="N6-AMP-lysine intermediate" evidence="3">
    <location>
        <position position="231"/>
    </location>
</feature>
<feature type="binding site" evidence="2">
    <location>
        <position position="229"/>
    </location>
    <ligand>
        <name>ATP</name>
        <dbReference type="ChEBI" id="CHEBI:30616"/>
    </ligand>
</feature>
<feature type="binding site" evidence="2">
    <location>
        <position position="236"/>
    </location>
    <ligand>
        <name>ATP</name>
        <dbReference type="ChEBI" id="CHEBI:30616"/>
    </ligand>
</feature>
<feature type="binding site" evidence="2">
    <location>
        <position position="283"/>
    </location>
    <ligand>
        <name>ATP</name>
        <dbReference type="ChEBI" id="CHEBI:30616"/>
    </ligand>
</feature>
<feature type="binding site" evidence="2">
    <location>
        <position position="283"/>
    </location>
    <ligand>
        <name>Mg(2+)</name>
        <dbReference type="ChEBI" id="CHEBI:18420"/>
        <label>1</label>
    </ligand>
</feature>
<feature type="binding site" evidence="2">
    <location>
        <position position="377"/>
    </location>
    <ligand>
        <name>Mg(2+)</name>
        <dbReference type="ChEBI" id="CHEBI:18420"/>
        <label>2</label>
    </ligand>
</feature>
<feature type="binding site" evidence="2">
    <location>
        <position position="382"/>
    </location>
    <ligand>
        <name>ATP</name>
        <dbReference type="ChEBI" id="CHEBI:30616"/>
    </ligand>
</feature>
<feature type="binding site" evidence="2">
    <location>
        <position position="397"/>
    </location>
    <ligand>
        <name>ATP</name>
        <dbReference type="ChEBI" id="CHEBI:30616"/>
    </ligand>
</feature>
<name>DNLI_VAR67</name>
<protein>
    <recommendedName>
        <fullName>DNA ligase</fullName>
        <ecNumber evidence="3">6.5.1.1</ecNumber>
    </recommendedName>
    <alternativeName>
        <fullName>Polydeoxyribonucleotide synthase [ATP]</fullName>
    </alternativeName>
</protein>
<sequence length="552" mass="63382">MTSLREFRKLCCAIYHASGYKEKSKLIRDFITDRDDKYLIIKLLLPGLDDRIYNMNDKQIIKIYSIIFKQSQKDMLQDLGYGYIGDTISTFFKENTEIRPRNKSILTLEDVDSFLTTLSSITKESHQIKLLTDIASVCTCNDLKCVVMLIDKDLKIKAGPRYVLNAISPHAYDVFRKSNNLKEIIENESKQNLDSISVSVMTPINPMLAESCDSVNKAFKKFPSGMFAEVKYDGERVQVHKNNNEFAFFSRNMKPVLSYKVDYLKEYIPKAFKKATSIVLDSEIVLVDEHNVQLPFGSLGIHKKKEYKNSNMCLFVFDCLYFDGFDMTDIPLYKRRSFLKDVMVEIPNRIVFSELTNISNESQLTDVLDDALTRKLEGLVLKDINGVYEPGKRRWLKIKRDYLNEGSMADSADLVVLGAYYGKGAKGGIMAVFLMGCYDDESGKWKTVTKCSGHDDNTLRVLQDQLTMVKINKDPKKIPEWLVVNKIYIPDFVVEDPKQSQIWEISGAEFTSSKSHTANGISIRFPRFTRIREDKTWKESTHLNDLVNLTKS</sequence>
<evidence type="ECO:0000250" key="1">
    <source>
        <dbReference type="UniProtKB" id="P16272"/>
    </source>
</evidence>
<evidence type="ECO:0000250" key="2">
    <source>
        <dbReference type="UniProtKB" id="P18858"/>
    </source>
</evidence>
<evidence type="ECO:0000255" key="3">
    <source>
        <dbReference type="PROSITE-ProRule" id="PRU10135"/>
    </source>
</evidence>
<evidence type="ECO:0000305" key="4"/>
<organismHost>
    <name type="scientific">Homo sapiens</name>
    <name type="common">Human</name>
    <dbReference type="NCBI Taxonomy" id="9606"/>
</organismHost>
<gene>
    <name type="primary">OPG180</name>
    <name type="synonym">LIG</name>
    <name type="ORF">A50R</name>
    <name type="ORF">J4R</name>
</gene>
<organism>
    <name type="scientific">Variola virus (isolate Human/India/Ind3/1967)</name>
    <name type="common">VARV</name>
    <name type="synonym">Smallpox virus</name>
    <dbReference type="NCBI Taxonomy" id="587200"/>
    <lineage>
        <taxon>Viruses</taxon>
        <taxon>Varidnaviria</taxon>
        <taxon>Bamfordvirae</taxon>
        <taxon>Nucleocytoviricota</taxon>
        <taxon>Pokkesviricetes</taxon>
        <taxon>Chitovirales</taxon>
        <taxon>Poxviridae</taxon>
        <taxon>Chordopoxvirinae</taxon>
        <taxon>Orthopoxvirus</taxon>
        <taxon>Variola virus</taxon>
    </lineage>
</organism>
<proteinExistence type="evidence at transcript level"/>